<comment type="similarity">
    <text evidence="1">Belongs to the eukaryotic ribosomal protein eL40 family.</text>
</comment>
<dbReference type="EMBL" id="CP001401">
    <property type="protein sequence ID" value="ACP55913.1"/>
    <property type="molecule type" value="Genomic_DNA"/>
</dbReference>
<dbReference type="SMR" id="C3MZT1"/>
<dbReference type="KEGG" id="sim:M1627_2044"/>
<dbReference type="HOGENOM" id="CLU_175093_1_0_2"/>
<dbReference type="Proteomes" id="UP000002307">
    <property type="component" value="Chromosome"/>
</dbReference>
<dbReference type="GO" id="GO:1990904">
    <property type="term" value="C:ribonucleoprotein complex"/>
    <property type="evidence" value="ECO:0007669"/>
    <property type="project" value="UniProtKB-KW"/>
</dbReference>
<dbReference type="GO" id="GO:0005840">
    <property type="term" value="C:ribosome"/>
    <property type="evidence" value="ECO:0007669"/>
    <property type="project" value="UniProtKB-KW"/>
</dbReference>
<dbReference type="GO" id="GO:0003735">
    <property type="term" value="F:structural constituent of ribosome"/>
    <property type="evidence" value="ECO:0007669"/>
    <property type="project" value="InterPro"/>
</dbReference>
<dbReference type="GO" id="GO:0006412">
    <property type="term" value="P:translation"/>
    <property type="evidence" value="ECO:0007669"/>
    <property type="project" value="UniProtKB-UniRule"/>
</dbReference>
<dbReference type="Gene3D" id="4.10.1060.50">
    <property type="match status" value="1"/>
</dbReference>
<dbReference type="HAMAP" id="MF_00788">
    <property type="entry name" value="Ribosomal_eL40"/>
    <property type="match status" value="1"/>
</dbReference>
<dbReference type="InterPro" id="IPR023657">
    <property type="entry name" value="Ribosomal_eL40_arc"/>
</dbReference>
<dbReference type="InterPro" id="IPR001975">
    <property type="entry name" value="Ribosomal_eL40_dom"/>
</dbReference>
<dbReference type="InterPro" id="IPR038587">
    <property type="entry name" value="Ribosomal_eL40_sf"/>
</dbReference>
<dbReference type="InterPro" id="IPR011332">
    <property type="entry name" value="Ribosomal_zn-bd"/>
</dbReference>
<dbReference type="NCBIfam" id="NF003161">
    <property type="entry name" value="PRK04136.1"/>
    <property type="match status" value="1"/>
</dbReference>
<dbReference type="PANTHER" id="PTHR39649">
    <property type="entry name" value="50S RIBOSOMAL PROTEIN L40E"/>
    <property type="match status" value="1"/>
</dbReference>
<dbReference type="PANTHER" id="PTHR39649:SF1">
    <property type="entry name" value="LARGE RIBOSOMAL SUBUNIT PROTEIN EL40"/>
    <property type="match status" value="1"/>
</dbReference>
<dbReference type="Pfam" id="PF01020">
    <property type="entry name" value="Ribosomal_L40e"/>
    <property type="match status" value="1"/>
</dbReference>
<dbReference type="SMART" id="SM01377">
    <property type="entry name" value="Ribosomal_L40e"/>
    <property type="match status" value="1"/>
</dbReference>
<dbReference type="SUPFAM" id="SSF57829">
    <property type="entry name" value="Zn-binding ribosomal proteins"/>
    <property type="match status" value="1"/>
</dbReference>
<feature type="chain" id="PRO_1000212948" description="Large ribosomal subunit protein eL40">
    <location>
        <begin position="1"/>
        <end position="56"/>
    </location>
</feature>
<protein>
    <recommendedName>
        <fullName evidence="1">Large ribosomal subunit protein eL40</fullName>
    </recommendedName>
    <alternativeName>
        <fullName evidence="2">50S ribosomal protein L40e</fullName>
    </alternativeName>
</protein>
<proteinExistence type="inferred from homology"/>
<accession>C3MZT1</accession>
<name>RL40_SACI3</name>
<keyword id="KW-0687">Ribonucleoprotein</keyword>
<keyword id="KW-0689">Ribosomal protein</keyword>
<organism>
    <name type="scientific">Saccharolobus islandicus (strain M.16.27)</name>
    <name type="common">Sulfolobus islandicus</name>
    <dbReference type="NCBI Taxonomy" id="427318"/>
    <lineage>
        <taxon>Archaea</taxon>
        <taxon>Thermoproteota</taxon>
        <taxon>Thermoprotei</taxon>
        <taxon>Sulfolobales</taxon>
        <taxon>Sulfolobaceae</taxon>
        <taxon>Saccharolobus</taxon>
    </lineage>
</organism>
<reference key="1">
    <citation type="journal article" date="2009" name="Proc. Natl. Acad. Sci. U.S.A.">
        <title>Biogeography of the Sulfolobus islandicus pan-genome.</title>
        <authorList>
            <person name="Reno M.L."/>
            <person name="Held N.L."/>
            <person name="Fields C.J."/>
            <person name="Burke P.V."/>
            <person name="Whitaker R.J."/>
        </authorList>
    </citation>
    <scope>NUCLEOTIDE SEQUENCE [LARGE SCALE GENOMIC DNA]</scope>
    <source>
        <strain>M.16.27</strain>
    </source>
</reference>
<sequence length="56" mass="6445">MPLTDPAKLQIVQQRVFLKKVCRKCGALNPIRATKCRRCHSTNLRLKKKELPTKKG</sequence>
<gene>
    <name evidence="1" type="primary">rpl40e</name>
    <name type="ordered locus">M1627_2044</name>
</gene>
<evidence type="ECO:0000255" key="1">
    <source>
        <dbReference type="HAMAP-Rule" id="MF_00788"/>
    </source>
</evidence>
<evidence type="ECO:0000305" key="2"/>